<protein>
    <recommendedName>
        <fullName evidence="1">Acetyl-coenzyme A carboxylase carboxyl transferase subunit alpha</fullName>
        <shortName evidence="1">ACCase subunit alpha</shortName>
        <shortName evidence="1">Acetyl-CoA carboxylase carboxyltransferase subunit alpha</shortName>
        <ecNumber evidence="1">2.1.3.15</ecNumber>
    </recommendedName>
</protein>
<dbReference type="EC" id="2.1.3.15" evidence="1"/>
<dbReference type="EMBL" id="CP000514">
    <property type="protein sequence ID" value="ABM18013.1"/>
    <property type="molecule type" value="Genomic_DNA"/>
</dbReference>
<dbReference type="RefSeq" id="WP_011784433.1">
    <property type="nucleotide sequence ID" value="NC_008740.1"/>
</dbReference>
<dbReference type="SMR" id="A1TZ44"/>
<dbReference type="STRING" id="351348.Maqu_0917"/>
<dbReference type="KEGG" id="maq:Maqu_0917"/>
<dbReference type="eggNOG" id="COG0825">
    <property type="taxonomic scope" value="Bacteria"/>
</dbReference>
<dbReference type="HOGENOM" id="CLU_015486_0_2_6"/>
<dbReference type="OrthoDB" id="9808023at2"/>
<dbReference type="UniPathway" id="UPA00655">
    <property type="reaction ID" value="UER00711"/>
</dbReference>
<dbReference type="Proteomes" id="UP000000998">
    <property type="component" value="Chromosome"/>
</dbReference>
<dbReference type="GO" id="GO:0009317">
    <property type="term" value="C:acetyl-CoA carboxylase complex"/>
    <property type="evidence" value="ECO:0007669"/>
    <property type="project" value="InterPro"/>
</dbReference>
<dbReference type="GO" id="GO:0003989">
    <property type="term" value="F:acetyl-CoA carboxylase activity"/>
    <property type="evidence" value="ECO:0007669"/>
    <property type="project" value="InterPro"/>
</dbReference>
<dbReference type="GO" id="GO:0005524">
    <property type="term" value="F:ATP binding"/>
    <property type="evidence" value="ECO:0007669"/>
    <property type="project" value="UniProtKB-KW"/>
</dbReference>
<dbReference type="GO" id="GO:0016743">
    <property type="term" value="F:carboxyl- or carbamoyltransferase activity"/>
    <property type="evidence" value="ECO:0007669"/>
    <property type="project" value="UniProtKB-UniRule"/>
</dbReference>
<dbReference type="GO" id="GO:0006633">
    <property type="term" value="P:fatty acid biosynthetic process"/>
    <property type="evidence" value="ECO:0007669"/>
    <property type="project" value="UniProtKB-KW"/>
</dbReference>
<dbReference type="GO" id="GO:2001295">
    <property type="term" value="P:malonyl-CoA biosynthetic process"/>
    <property type="evidence" value="ECO:0007669"/>
    <property type="project" value="UniProtKB-UniRule"/>
</dbReference>
<dbReference type="FunFam" id="3.90.226.10:FF:000008">
    <property type="entry name" value="Acetyl-coenzyme A carboxylase carboxyl transferase subunit alpha"/>
    <property type="match status" value="1"/>
</dbReference>
<dbReference type="Gene3D" id="3.90.226.10">
    <property type="entry name" value="2-enoyl-CoA Hydratase, Chain A, domain 1"/>
    <property type="match status" value="1"/>
</dbReference>
<dbReference type="HAMAP" id="MF_00823">
    <property type="entry name" value="AcetylCoA_CT_alpha"/>
    <property type="match status" value="1"/>
</dbReference>
<dbReference type="InterPro" id="IPR001095">
    <property type="entry name" value="Acetyl_CoA_COase_a_su"/>
</dbReference>
<dbReference type="InterPro" id="IPR029045">
    <property type="entry name" value="ClpP/crotonase-like_dom_sf"/>
</dbReference>
<dbReference type="InterPro" id="IPR011763">
    <property type="entry name" value="COA_CT_C"/>
</dbReference>
<dbReference type="NCBIfam" id="TIGR00513">
    <property type="entry name" value="accA"/>
    <property type="match status" value="1"/>
</dbReference>
<dbReference type="NCBIfam" id="NF041504">
    <property type="entry name" value="AccA_sub"/>
    <property type="match status" value="1"/>
</dbReference>
<dbReference type="NCBIfam" id="NF004344">
    <property type="entry name" value="PRK05724.1"/>
    <property type="match status" value="1"/>
</dbReference>
<dbReference type="PANTHER" id="PTHR42853">
    <property type="entry name" value="ACETYL-COENZYME A CARBOXYLASE CARBOXYL TRANSFERASE SUBUNIT ALPHA"/>
    <property type="match status" value="1"/>
</dbReference>
<dbReference type="PANTHER" id="PTHR42853:SF3">
    <property type="entry name" value="ACETYL-COENZYME A CARBOXYLASE CARBOXYL TRANSFERASE SUBUNIT ALPHA, CHLOROPLASTIC"/>
    <property type="match status" value="1"/>
</dbReference>
<dbReference type="Pfam" id="PF03255">
    <property type="entry name" value="ACCA"/>
    <property type="match status" value="1"/>
</dbReference>
<dbReference type="PRINTS" id="PR01069">
    <property type="entry name" value="ACCCTRFRASEA"/>
</dbReference>
<dbReference type="SUPFAM" id="SSF52096">
    <property type="entry name" value="ClpP/crotonase"/>
    <property type="match status" value="1"/>
</dbReference>
<dbReference type="PROSITE" id="PS50989">
    <property type="entry name" value="COA_CT_CTER"/>
    <property type="match status" value="1"/>
</dbReference>
<proteinExistence type="inferred from homology"/>
<reference key="1">
    <citation type="journal article" date="2011" name="Appl. Environ. Microbiol.">
        <title>Genomic potential of Marinobacter aquaeolei, a biogeochemical 'opportunitroph'.</title>
        <authorList>
            <person name="Singer E."/>
            <person name="Webb E.A."/>
            <person name="Nelson W.C."/>
            <person name="Heidelberg J.F."/>
            <person name="Ivanova N."/>
            <person name="Pati A."/>
            <person name="Edwards K.J."/>
        </authorList>
    </citation>
    <scope>NUCLEOTIDE SEQUENCE [LARGE SCALE GENOMIC DNA]</scope>
    <source>
        <strain>ATCC 700491 / DSM 11845 / VT8</strain>
    </source>
</reference>
<comment type="function">
    <text evidence="1">Component of the acetyl coenzyme A carboxylase (ACC) complex. First, biotin carboxylase catalyzes the carboxylation of biotin on its carrier protein (BCCP) and then the CO(2) group is transferred by the carboxyltransferase to acetyl-CoA to form malonyl-CoA.</text>
</comment>
<comment type="catalytic activity">
    <reaction evidence="1">
        <text>N(6)-carboxybiotinyl-L-lysyl-[protein] + acetyl-CoA = N(6)-biotinyl-L-lysyl-[protein] + malonyl-CoA</text>
        <dbReference type="Rhea" id="RHEA:54728"/>
        <dbReference type="Rhea" id="RHEA-COMP:10505"/>
        <dbReference type="Rhea" id="RHEA-COMP:10506"/>
        <dbReference type="ChEBI" id="CHEBI:57288"/>
        <dbReference type="ChEBI" id="CHEBI:57384"/>
        <dbReference type="ChEBI" id="CHEBI:83144"/>
        <dbReference type="ChEBI" id="CHEBI:83145"/>
        <dbReference type="EC" id="2.1.3.15"/>
    </reaction>
</comment>
<comment type="pathway">
    <text evidence="1">Lipid metabolism; malonyl-CoA biosynthesis; malonyl-CoA from acetyl-CoA: step 1/1.</text>
</comment>
<comment type="subunit">
    <text evidence="1">Acetyl-CoA carboxylase is a heterohexamer composed of biotin carboxyl carrier protein (AccB), biotin carboxylase (AccC) and two subunits each of ACCase subunit alpha (AccA) and ACCase subunit beta (AccD).</text>
</comment>
<comment type="subcellular location">
    <subcellularLocation>
        <location evidence="1">Cytoplasm</location>
    </subcellularLocation>
</comment>
<comment type="similarity">
    <text evidence="1">Belongs to the AccA family.</text>
</comment>
<gene>
    <name evidence="1" type="primary">accA</name>
    <name type="ordered locus">Maqu_0917</name>
</gene>
<feature type="chain" id="PRO_1000062637" description="Acetyl-coenzyme A carboxylase carboxyl transferase subunit alpha">
    <location>
        <begin position="1"/>
        <end position="317"/>
    </location>
</feature>
<feature type="domain" description="CoA carboxyltransferase C-terminal" evidence="2">
    <location>
        <begin position="39"/>
        <end position="293"/>
    </location>
</feature>
<sequence>MNPNYLDFEQPIADLEAKIEELRMVGNDTDINITDEISRLKKKSISLTESIFSDLKSWDIARLARHPRRPYTQDYIDLIFEDFDELHGDRRYADDLSIIGGTARLDNTPVMIIGHQKGREVRDKVKRNFGMPRPEGYRKALRLMEMAERFKMPILTFIDTPGAYPGIGAEERGQSEAIAFNLAVMSRLKTPIISTVIGEGGSGGALAIGVCDQLNMLQYSTYAVISPEGCASILWKSAEYAAQAAEAMGVTADRLKELGVADHVIDEPLGGAHRNPEKMAETLKTSLAQGVAELSRLPLDELVSRRYERLTRYDGGR</sequence>
<evidence type="ECO:0000255" key="1">
    <source>
        <dbReference type="HAMAP-Rule" id="MF_00823"/>
    </source>
</evidence>
<evidence type="ECO:0000255" key="2">
    <source>
        <dbReference type="PROSITE-ProRule" id="PRU01137"/>
    </source>
</evidence>
<keyword id="KW-0067">ATP-binding</keyword>
<keyword id="KW-0963">Cytoplasm</keyword>
<keyword id="KW-0275">Fatty acid biosynthesis</keyword>
<keyword id="KW-0276">Fatty acid metabolism</keyword>
<keyword id="KW-0444">Lipid biosynthesis</keyword>
<keyword id="KW-0443">Lipid metabolism</keyword>
<keyword id="KW-0547">Nucleotide-binding</keyword>
<keyword id="KW-0808">Transferase</keyword>
<name>ACCA_MARN8</name>
<accession>A1TZ44</accession>
<organism>
    <name type="scientific">Marinobacter nauticus (strain ATCC 700491 / DSM 11845 / VT8)</name>
    <name type="common">Marinobacter aquaeolei</name>
    <dbReference type="NCBI Taxonomy" id="351348"/>
    <lineage>
        <taxon>Bacteria</taxon>
        <taxon>Pseudomonadati</taxon>
        <taxon>Pseudomonadota</taxon>
        <taxon>Gammaproteobacteria</taxon>
        <taxon>Pseudomonadales</taxon>
        <taxon>Marinobacteraceae</taxon>
        <taxon>Marinobacter</taxon>
    </lineage>
</organism>